<organism>
    <name type="scientific">Escherichia coli O6:H1 (strain CFT073 / ATCC 700928 / UPEC)</name>
    <dbReference type="NCBI Taxonomy" id="199310"/>
    <lineage>
        <taxon>Bacteria</taxon>
        <taxon>Pseudomonadati</taxon>
        <taxon>Pseudomonadota</taxon>
        <taxon>Gammaproteobacteria</taxon>
        <taxon>Enterobacterales</taxon>
        <taxon>Enterobacteriaceae</taxon>
        <taxon>Escherichia</taxon>
    </lineage>
</organism>
<feature type="initiator methionine" description="Removed" evidence="1">
    <location>
        <position position="1"/>
    </location>
</feature>
<feature type="chain" id="PRO_0000183098" description="Crossover junction endodeoxyribonuclease RuvC">
    <location>
        <begin position="2"/>
        <end position="173"/>
    </location>
</feature>
<feature type="active site" evidence="2">
    <location>
        <position position="8"/>
    </location>
</feature>
<feature type="active site" evidence="2">
    <location>
        <position position="67"/>
    </location>
</feature>
<feature type="active site" evidence="2">
    <location>
        <position position="139"/>
    </location>
</feature>
<feature type="binding site" evidence="2">
    <location>
        <position position="8"/>
    </location>
    <ligand>
        <name>Mg(2+)</name>
        <dbReference type="ChEBI" id="CHEBI:18420"/>
        <label>1</label>
    </ligand>
</feature>
<feature type="binding site" evidence="2">
    <location>
        <position position="67"/>
    </location>
    <ligand>
        <name>Mg(2+)</name>
        <dbReference type="ChEBI" id="CHEBI:18420"/>
        <label>2</label>
    </ligand>
</feature>
<feature type="binding site" evidence="2">
    <location>
        <position position="139"/>
    </location>
    <ligand>
        <name>Mg(2+)</name>
        <dbReference type="ChEBI" id="CHEBI:18420"/>
        <label>1</label>
    </ligand>
</feature>
<reference key="1">
    <citation type="journal article" date="2002" name="Proc. Natl. Acad. Sci. U.S.A.">
        <title>Extensive mosaic structure revealed by the complete genome sequence of uropathogenic Escherichia coli.</title>
        <authorList>
            <person name="Welch R.A."/>
            <person name="Burland V."/>
            <person name="Plunkett G. III"/>
            <person name="Redford P."/>
            <person name="Roesch P."/>
            <person name="Rasko D."/>
            <person name="Buckles E.L."/>
            <person name="Liou S.-R."/>
            <person name="Boutin A."/>
            <person name="Hackett J."/>
            <person name="Stroud D."/>
            <person name="Mayhew G.F."/>
            <person name="Rose D.J."/>
            <person name="Zhou S."/>
            <person name="Schwartz D.C."/>
            <person name="Perna N.T."/>
            <person name="Mobley H.L.T."/>
            <person name="Donnenberg M.S."/>
            <person name="Blattner F.R."/>
        </authorList>
    </citation>
    <scope>NUCLEOTIDE SEQUENCE [LARGE SCALE GENOMIC DNA]</scope>
    <source>
        <strain>CFT073 / ATCC 700928 / UPEC</strain>
    </source>
</reference>
<accession>P0A815</accession>
<accession>P24239</accession>
<keyword id="KW-0963">Cytoplasm</keyword>
<keyword id="KW-0227">DNA damage</keyword>
<keyword id="KW-0233">DNA recombination</keyword>
<keyword id="KW-0234">DNA repair</keyword>
<keyword id="KW-0238">DNA-binding</keyword>
<keyword id="KW-0255">Endonuclease</keyword>
<keyword id="KW-0378">Hydrolase</keyword>
<keyword id="KW-0460">Magnesium</keyword>
<keyword id="KW-0479">Metal-binding</keyword>
<keyword id="KW-0540">Nuclease</keyword>
<keyword id="KW-1185">Reference proteome</keyword>
<comment type="function">
    <text evidence="2">The RuvA-RuvB-RuvC complex processes Holliday junction (HJ) DNA during genetic recombination and DNA repair. Endonuclease that resolves HJ intermediates. Cleaves cruciform DNA by making single-stranded nicks across the HJ at symmetrical positions within the homologous arms, yielding a 5'-phosphate and a 3'-hydroxyl group; requires a central core of homology in the junction. The consensus cleavage sequence is 5'-(A/T)TT(C/G)-3'. Cleavage occurs on the 3'-side of the TT dinucleotide at the point of strand exchange. HJ branch migration catalyzed by RuvA-RuvB allows RuvC to scan DNA until it finds its consensus sequence, where it cleaves and resolves the cruciform DNA.</text>
</comment>
<comment type="catalytic activity">
    <reaction evidence="2">
        <text>Endonucleolytic cleavage at a junction such as a reciprocal single-stranded crossover between two homologous DNA duplexes (Holliday junction).</text>
        <dbReference type="EC" id="3.1.21.10"/>
    </reaction>
</comment>
<comment type="cofactor">
    <cofactor evidence="2">
        <name>Mg(2+)</name>
        <dbReference type="ChEBI" id="CHEBI:18420"/>
    </cofactor>
    <text evidence="2">Binds 2 Mg(2+) ion per subunit.</text>
</comment>
<comment type="subunit">
    <text evidence="2">Homodimer which binds Holliday junction (HJ) DNA. The HJ becomes 2-fold symmetrical on binding to RuvC with unstacked arms; it has a different conformation from HJ DNA in complex with RuvA. In the full resolvosome a probable DNA-RuvA(4)-RuvB(12)-RuvC(2) complex forms which resolves the HJ.</text>
</comment>
<comment type="subcellular location">
    <subcellularLocation>
        <location evidence="2">Cytoplasm</location>
    </subcellularLocation>
</comment>
<comment type="similarity">
    <text evidence="2 3">Belongs to the RuvC family.</text>
</comment>
<comment type="sequence caution" evidence="3">
    <conflict type="erroneous initiation">
        <sequence resource="EMBL-CDS" id="AAN80734"/>
    </conflict>
    <text>Extended N-terminus.</text>
</comment>
<proteinExistence type="inferred from homology"/>
<sequence length="173" mass="18747">MAIILGIDPGSRVTGYGVIRQVGRQLSYLGSGCIRTKVDDLPSRLKLIYAGVTEIITQFQPDYFAIEQVFMAKNADSALKLGQARGVAIVAAVNQELPVFEYAARQVKQTVVGIGSAEKSQVQHMVRTLLKLPANPQADAADALAIAITHCHVSQNAMQMSESRLNLARGRLR</sequence>
<protein>
    <recommendedName>
        <fullName evidence="2">Crossover junction endodeoxyribonuclease RuvC</fullName>
        <ecNumber evidence="2">3.1.21.10</ecNumber>
    </recommendedName>
    <alternativeName>
        <fullName evidence="2">Holliday junction nuclease RuvC</fullName>
    </alternativeName>
    <alternativeName>
        <fullName evidence="2">Holliday junction resolvase RuvC</fullName>
    </alternativeName>
</protein>
<name>RUVC_ECOL6</name>
<dbReference type="EC" id="3.1.21.10" evidence="2"/>
<dbReference type="EMBL" id="AE014075">
    <property type="protein sequence ID" value="AAN80734.1"/>
    <property type="status" value="ALT_INIT"/>
    <property type="molecule type" value="Genomic_DNA"/>
</dbReference>
<dbReference type="RefSeq" id="WP_001295503.1">
    <property type="nucleotide sequence ID" value="NZ_CP051263.1"/>
</dbReference>
<dbReference type="SMR" id="P0A815"/>
<dbReference type="STRING" id="199310.c2277"/>
<dbReference type="GeneID" id="89516631"/>
<dbReference type="KEGG" id="ecc:c2277"/>
<dbReference type="eggNOG" id="COG0817">
    <property type="taxonomic scope" value="Bacteria"/>
</dbReference>
<dbReference type="HOGENOM" id="CLU_091257_2_1_6"/>
<dbReference type="Proteomes" id="UP000001410">
    <property type="component" value="Chromosome"/>
</dbReference>
<dbReference type="GO" id="GO:0005737">
    <property type="term" value="C:cytoplasm"/>
    <property type="evidence" value="ECO:0007669"/>
    <property type="project" value="UniProtKB-SubCell"/>
</dbReference>
<dbReference type="GO" id="GO:0048476">
    <property type="term" value="C:Holliday junction resolvase complex"/>
    <property type="evidence" value="ECO:0007669"/>
    <property type="project" value="UniProtKB-UniRule"/>
</dbReference>
<dbReference type="GO" id="GO:0008821">
    <property type="term" value="F:crossover junction DNA endonuclease activity"/>
    <property type="evidence" value="ECO:0007669"/>
    <property type="project" value="UniProtKB-UniRule"/>
</dbReference>
<dbReference type="GO" id="GO:0003677">
    <property type="term" value="F:DNA binding"/>
    <property type="evidence" value="ECO:0007669"/>
    <property type="project" value="UniProtKB-KW"/>
</dbReference>
<dbReference type="GO" id="GO:0000287">
    <property type="term" value="F:magnesium ion binding"/>
    <property type="evidence" value="ECO:0007669"/>
    <property type="project" value="UniProtKB-UniRule"/>
</dbReference>
<dbReference type="GO" id="GO:0006310">
    <property type="term" value="P:DNA recombination"/>
    <property type="evidence" value="ECO:0007669"/>
    <property type="project" value="UniProtKB-UniRule"/>
</dbReference>
<dbReference type="GO" id="GO:0006281">
    <property type="term" value="P:DNA repair"/>
    <property type="evidence" value="ECO:0007669"/>
    <property type="project" value="UniProtKB-UniRule"/>
</dbReference>
<dbReference type="CDD" id="cd16962">
    <property type="entry name" value="RuvC"/>
    <property type="match status" value="1"/>
</dbReference>
<dbReference type="FunFam" id="3.30.420.10:FF:000002">
    <property type="entry name" value="Crossover junction endodeoxyribonuclease RuvC"/>
    <property type="match status" value="1"/>
</dbReference>
<dbReference type="Gene3D" id="3.30.420.10">
    <property type="entry name" value="Ribonuclease H-like superfamily/Ribonuclease H"/>
    <property type="match status" value="1"/>
</dbReference>
<dbReference type="HAMAP" id="MF_00034">
    <property type="entry name" value="RuvC"/>
    <property type="match status" value="1"/>
</dbReference>
<dbReference type="InterPro" id="IPR012337">
    <property type="entry name" value="RNaseH-like_sf"/>
</dbReference>
<dbReference type="InterPro" id="IPR036397">
    <property type="entry name" value="RNaseH_sf"/>
</dbReference>
<dbReference type="InterPro" id="IPR020563">
    <property type="entry name" value="X-over_junc_endoDNase_Mg_BS"/>
</dbReference>
<dbReference type="InterPro" id="IPR002176">
    <property type="entry name" value="X-over_junc_endoDNase_RuvC"/>
</dbReference>
<dbReference type="NCBIfam" id="NF000711">
    <property type="entry name" value="PRK00039.2-1"/>
    <property type="match status" value="1"/>
</dbReference>
<dbReference type="NCBIfam" id="TIGR00228">
    <property type="entry name" value="ruvC"/>
    <property type="match status" value="1"/>
</dbReference>
<dbReference type="PANTHER" id="PTHR30194">
    <property type="entry name" value="CROSSOVER JUNCTION ENDODEOXYRIBONUCLEASE RUVC"/>
    <property type="match status" value="1"/>
</dbReference>
<dbReference type="PANTHER" id="PTHR30194:SF3">
    <property type="entry name" value="CROSSOVER JUNCTION ENDODEOXYRIBONUCLEASE RUVC"/>
    <property type="match status" value="1"/>
</dbReference>
<dbReference type="Pfam" id="PF02075">
    <property type="entry name" value="RuvC"/>
    <property type="match status" value="1"/>
</dbReference>
<dbReference type="PRINTS" id="PR00696">
    <property type="entry name" value="RSOLVASERUVC"/>
</dbReference>
<dbReference type="SUPFAM" id="SSF53098">
    <property type="entry name" value="Ribonuclease H-like"/>
    <property type="match status" value="1"/>
</dbReference>
<dbReference type="PROSITE" id="PS01321">
    <property type="entry name" value="RUVC"/>
    <property type="match status" value="1"/>
</dbReference>
<gene>
    <name evidence="2" type="primary">ruvC</name>
    <name type="ordered locus">c2277</name>
</gene>
<evidence type="ECO:0000250" key="1"/>
<evidence type="ECO:0000255" key="2">
    <source>
        <dbReference type="HAMAP-Rule" id="MF_00034"/>
    </source>
</evidence>
<evidence type="ECO:0000305" key="3"/>